<dbReference type="EC" id="2.7.7.9"/>
<dbReference type="EMBL" id="AF203909">
    <property type="protein sequence ID" value="AAF19422.1"/>
    <property type="molecule type" value="mRNA"/>
</dbReference>
<dbReference type="SMR" id="Q9SDX3"/>
<dbReference type="GO" id="GO:0005737">
    <property type="term" value="C:cytoplasm"/>
    <property type="evidence" value="ECO:0007669"/>
    <property type="project" value="UniProtKB-SubCell"/>
</dbReference>
<dbReference type="GO" id="GO:0003983">
    <property type="term" value="F:UTP:glucose-1-phosphate uridylyltransferase activity"/>
    <property type="evidence" value="ECO:0007669"/>
    <property type="project" value="UniProtKB-EC"/>
</dbReference>
<dbReference type="GO" id="GO:0006011">
    <property type="term" value="P:UDP-alpha-D-glucose metabolic process"/>
    <property type="evidence" value="ECO:0007669"/>
    <property type="project" value="InterPro"/>
</dbReference>
<dbReference type="CDD" id="cd00897">
    <property type="entry name" value="UGPase_euk"/>
    <property type="match status" value="1"/>
</dbReference>
<dbReference type="FunFam" id="2.160.10.10:FF:000001">
    <property type="entry name" value="UTP--glucose-1-phosphate uridylyltransferase"/>
    <property type="match status" value="1"/>
</dbReference>
<dbReference type="FunFam" id="3.90.550.10:FF:000073">
    <property type="entry name" value="UTP--glucose-1-phosphate uridylyltransferase"/>
    <property type="match status" value="1"/>
</dbReference>
<dbReference type="Gene3D" id="2.160.10.10">
    <property type="entry name" value="Hexapeptide repeat proteins"/>
    <property type="match status" value="1"/>
</dbReference>
<dbReference type="Gene3D" id="3.90.550.10">
    <property type="entry name" value="Spore Coat Polysaccharide Biosynthesis Protein SpsA, Chain A"/>
    <property type="match status" value="1"/>
</dbReference>
<dbReference type="InterPro" id="IPR029044">
    <property type="entry name" value="Nucleotide-diphossugar_trans"/>
</dbReference>
<dbReference type="InterPro" id="IPR002618">
    <property type="entry name" value="UDPGP_fam"/>
</dbReference>
<dbReference type="InterPro" id="IPR016267">
    <property type="entry name" value="UDPGP_trans"/>
</dbReference>
<dbReference type="PANTHER" id="PTHR43511">
    <property type="match status" value="1"/>
</dbReference>
<dbReference type="Pfam" id="PF01704">
    <property type="entry name" value="UDPGP"/>
    <property type="match status" value="1"/>
</dbReference>
<dbReference type="PIRSF" id="PIRSF000806">
    <property type="entry name" value="UDPGP"/>
    <property type="match status" value="1"/>
</dbReference>
<dbReference type="SUPFAM" id="SSF53448">
    <property type="entry name" value="Nucleotide-diphospho-sugar transferases"/>
    <property type="match status" value="1"/>
</dbReference>
<evidence type="ECO:0000250" key="1"/>
<evidence type="ECO:0000250" key="2">
    <source>
        <dbReference type="UniProtKB" id="Q16851"/>
    </source>
</evidence>
<evidence type="ECO:0000250" key="3">
    <source>
        <dbReference type="UniProtKB" id="Q9M9P3"/>
    </source>
</evidence>
<evidence type="ECO:0000305" key="4"/>
<reference key="1">
    <citation type="submission" date="1999-11" db="EMBL/GenBank/DDBJ databases">
        <title>Molecular cloning and characterization of UDP-glucose pyrophosphorylase in banana.</title>
        <authorList>
            <person name="Lim S.S.W."/>
            <person name="Pua E.C."/>
        </authorList>
    </citation>
    <scope>NUCLEOTIDE SEQUENCE [MRNA]</scope>
</reference>
<gene>
    <name type="primary">UGPA</name>
</gene>
<name>UGPA_MUSAC</name>
<accession>Q9SDX3</accession>
<keyword id="KW-0963">Cytoplasm</keyword>
<keyword id="KW-0548">Nucleotidyltransferase</keyword>
<keyword id="KW-0808">Transferase</keyword>
<comment type="function">
    <text evidence="1">Plays a central role as a glucosyl donor in cellular metabolic pathways.</text>
</comment>
<comment type="catalytic activity">
    <reaction>
        <text>alpha-D-glucose 1-phosphate + UTP + H(+) = UDP-alpha-D-glucose + diphosphate</text>
        <dbReference type="Rhea" id="RHEA:19889"/>
        <dbReference type="ChEBI" id="CHEBI:15378"/>
        <dbReference type="ChEBI" id="CHEBI:33019"/>
        <dbReference type="ChEBI" id="CHEBI:46398"/>
        <dbReference type="ChEBI" id="CHEBI:58601"/>
        <dbReference type="ChEBI" id="CHEBI:58885"/>
        <dbReference type="EC" id="2.7.7.9"/>
    </reaction>
</comment>
<comment type="subcellular location">
    <subcellularLocation>
        <location evidence="1">Cytoplasm</location>
    </subcellularLocation>
</comment>
<comment type="similarity">
    <text evidence="4">Belongs to the UDPGP type 1 family.</text>
</comment>
<protein>
    <recommendedName>
        <fullName>UTP--glucose-1-phosphate uridylyltransferase</fullName>
        <ecNumber>2.7.7.9</ecNumber>
    </recommendedName>
    <alternativeName>
        <fullName>UDP-glucose pyrophosphorylase</fullName>
        <shortName>UDPGP</shortName>
        <shortName>UGPase</shortName>
    </alternativeName>
</protein>
<feature type="chain" id="PRO_0000185760" description="UTP--glucose-1-phosphate uridylyltransferase">
    <location>
        <begin position="1"/>
        <end position="467"/>
    </location>
</feature>
<feature type="binding site" evidence="3">
    <location>
        <begin position="83"/>
        <end position="86"/>
    </location>
    <ligand>
        <name>UTP</name>
        <dbReference type="ChEBI" id="CHEBI:46398"/>
    </ligand>
</feature>
<feature type="binding site" evidence="2">
    <location>
        <begin position="85"/>
        <end position="86"/>
    </location>
    <ligand>
        <name>substrate</name>
    </ligand>
</feature>
<feature type="binding site" evidence="3">
    <location>
        <position position="97"/>
    </location>
    <ligand>
        <name>UTP</name>
        <dbReference type="ChEBI" id="CHEBI:46398"/>
    </ligand>
</feature>
<feature type="binding site" evidence="3">
    <location>
        <position position="160"/>
    </location>
    <ligand>
        <name>UTP</name>
        <dbReference type="ChEBI" id="CHEBI:46398"/>
    </ligand>
</feature>
<feature type="binding site" evidence="3">
    <location>
        <position position="189"/>
    </location>
    <ligand>
        <name>UTP</name>
        <dbReference type="ChEBI" id="CHEBI:46398"/>
    </ligand>
</feature>
<feature type="binding site" evidence="2">
    <location>
        <position position="190"/>
    </location>
    <ligand>
        <name>substrate</name>
    </ligand>
</feature>
<feature type="binding site" evidence="2">
    <location>
        <begin position="218"/>
        <end position="220"/>
    </location>
    <ligand>
        <name>substrate</name>
    </ligand>
</feature>
<feature type="binding site" evidence="3">
    <location>
        <position position="220"/>
    </location>
    <ligand>
        <name>UTP</name>
        <dbReference type="ChEBI" id="CHEBI:46398"/>
    </ligand>
</feature>
<feature type="binding site" evidence="3">
    <location>
        <position position="358"/>
    </location>
    <ligand>
        <name>UTP</name>
        <dbReference type="ChEBI" id="CHEBI:46398"/>
    </ligand>
</feature>
<organism>
    <name type="scientific">Musa acuminata</name>
    <name type="common">Banana</name>
    <name type="synonym">Musa cavendishii</name>
    <dbReference type="NCBI Taxonomy" id="4641"/>
    <lineage>
        <taxon>Eukaryota</taxon>
        <taxon>Viridiplantae</taxon>
        <taxon>Streptophyta</taxon>
        <taxon>Embryophyta</taxon>
        <taxon>Tracheophyta</taxon>
        <taxon>Spermatophyta</taxon>
        <taxon>Magnoliopsida</taxon>
        <taxon>Liliopsida</taxon>
        <taxon>Zingiberales</taxon>
        <taxon>Musaceae</taxon>
        <taxon>Musa</taxon>
    </lineage>
</organism>
<sequence>MADAKIAKLQSAVAELNQISENEKSGFISLVSRYLSGEAEQIEWSKIQTPTDEVVVPYDTLSPPPEDLEATKKLLDKLAVLKLNGGLGTTMGCTGPKSVIEVRNGFTFLDLIVIQIESLNKKYGCNVPLLLMNSFNTHDDTQKIVEKYANSNIEIHTFNQSQYPRLVMEDFQPLPSKGHAGKDGWYPPGHGDVFPSLMNSGKLDALLSQGKEYVFIANSDNLGAIVDIKILNHLINNQNEYCMEVTPKTLADVKGGTLISYEGRVQLLEIAQVPDAHVNEFKSIEKFKIFNTNNLWVNLKAIKRLVEADALKMEIIPNPKEVDGVKVLQLETAAGAAIRFFDHAIGINVPRSRFLPVKATSDLLLVQSDLYMLVDGFVIRNKARTNPSNPSIELGPEFKKVANFLSRFKSIPSIVELDSLKVSGDVWFGEGVVLKGNVSIAAKSGVKLEISDGAVLENKVINGPEDI</sequence>
<proteinExistence type="evidence at transcript level"/>